<feature type="chain" id="PRO_0000161499" description="tRNA uridine(34) hydroxylase">
    <location>
        <begin position="1"/>
        <end position="317"/>
    </location>
</feature>
<feature type="domain" description="Rhodanese" evidence="1">
    <location>
        <begin position="129"/>
        <end position="223"/>
    </location>
</feature>
<feature type="region of interest" description="Disordered" evidence="2">
    <location>
        <begin position="298"/>
        <end position="317"/>
    </location>
</feature>
<feature type="active site" description="Cysteine persulfide intermediate" evidence="1">
    <location>
        <position position="183"/>
    </location>
</feature>
<proteinExistence type="inferred from homology"/>
<dbReference type="EC" id="1.14.-.-" evidence="1"/>
<dbReference type="EMBL" id="AE016853">
    <property type="protein sequence ID" value="AAO55254.1"/>
    <property type="molecule type" value="Genomic_DNA"/>
</dbReference>
<dbReference type="RefSeq" id="NP_791559.1">
    <property type="nucleotide sequence ID" value="NC_004578.1"/>
</dbReference>
<dbReference type="RefSeq" id="WP_005766720.1">
    <property type="nucleotide sequence ID" value="NC_004578.1"/>
</dbReference>
<dbReference type="SMR" id="Q885U7"/>
<dbReference type="STRING" id="223283.PSPTO_1734"/>
<dbReference type="GeneID" id="1183371"/>
<dbReference type="KEGG" id="pst:PSPTO_1734"/>
<dbReference type="PATRIC" id="fig|223283.9.peg.1761"/>
<dbReference type="eggNOG" id="COG1054">
    <property type="taxonomic scope" value="Bacteria"/>
</dbReference>
<dbReference type="HOGENOM" id="CLU_038878_0_0_6"/>
<dbReference type="OrthoDB" id="9778326at2"/>
<dbReference type="PhylomeDB" id="Q885U7"/>
<dbReference type="Proteomes" id="UP000002515">
    <property type="component" value="Chromosome"/>
</dbReference>
<dbReference type="GO" id="GO:0016705">
    <property type="term" value="F:oxidoreductase activity, acting on paired donors, with incorporation or reduction of molecular oxygen"/>
    <property type="evidence" value="ECO:0007669"/>
    <property type="project" value="UniProtKB-UniRule"/>
</dbReference>
<dbReference type="GO" id="GO:0006400">
    <property type="term" value="P:tRNA modification"/>
    <property type="evidence" value="ECO:0007669"/>
    <property type="project" value="UniProtKB-UniRule"/>
</dbReference>
<dbReference type="CDD" id="cd01518">
    <property type="entry name" value="RHOD_YceA"/>
    <property type="match status" value="1"/>
</dbReference>
<dbReference type="Gene3D" id="3.30.70.100">
    <property type="match status" value="1"/>
</dbReference>
<dbReference type="Gene3D" id="3.40.250.10">
    <property type="entry name" value="Rhodanese-like domain"/>
    <property type="match status" value="1"/>
</dbReference>
<dbReference type="HAMAP" id="MF_00469">
    <property type="entry name" value="TrhO"/>
    <property type="match status" value="1"/>
</dbReference>
<dbReference type="InterPro" id="IPR001763">
    <property type="entry name" value="Rhodanese-like_dom"/>
</dbReference>
<dbReference type="InterPro" id="IPR036873">
    <property type="entry name" value="Rhodanese-like_dom_sf"/>
</dbReference>
<dbReference type="InterPro" id="IPR020936">
    <property type="entry name" value="TrhO"/>
</dbReference>
<dbReference type="InterPro" id="IPR040503">
    <property type="entry name" value="TRHO_N"/>
</dbReference>
<dbReference type="NCBIfam" id="NF001136">
    <property type="entry name" value="PRK00142.1-4"/>
    <property type="match status" value="1"/>
</dbReference>
<dbReference type="PANTHER" id="PTHR43268:SF3">
    <property type="entry name" value="RHODANESE-LIKE DOMAIN-CONTAINING PROTEIN 7-RELATED"/>
    <property type="match status" value="1"/>
</dbReference>
<dbReference type="PANTHER" id="PTHR43268">
    <property type="entry name" value="THIOSULFATE SULFURTRANSFERASE/RHODANESE-LIKE DOMAIN-CONTAINING PROTEIN 2"/>
    <property type="match status" value="1"/>
</dbReference>
<dbReference type="Pfam" id="PF00581">
    <property type="entry name" value="Rhodanese"/>
    <property type="match status" value="1"/>
</dbReference>
<dbReference type="Pfam" id="PF17773">
    <property type="entry name" value="UPF0176_N"/>
    <property type="match status" value="1"/>
</dbReference>
<dbReference type="SMART" id="SM00450">
    <property type="entry name" value="RHOD"/>
    <property type="match status" value="1"/>
</dbReference>
<dbReference type="SUPFAM" id="SSF52821">
    <property type="entry name" value="Rhodanese/Cell cycle control phosphatase"/>
    <property type="match status" value="1"/>
</dbReference>
<dbReference type="PROSITE" id="PS50206">
    <property type="entry name" value="RHODANESE_3"/>
    <property type="match status" value="1"/>
</dbReference>
<accession>Q885U7</accession>
<protein>
    <recommendedName>
        <fullName evidence="1">tRNA uridine(34) hydroxylase</fullName>
        <ecNumber evidence="1">1.14.-.-</ecNumber>
    </recommendedName>
    <alternativeName>
        <fullName evidence="1">tRNA hydroxylation protein O</fullName>
    </alternativeName>
</protein>
<evidence type="ECO:0000255" key="1">
    <source>
        <dbReference type="HAMAP-Rule" id="MF_00469"/>
    </source>
</evidence>
<evidence type="ECO:0000256" key="2">
    <source>
        <dbReference type="SAM" id="MobiDB-lite"/>
    </source>
</evidence>
<sequence length="317" mass="35856">MTQESINQPIVVAALYKFVTLSDYVAFREPLLQAMVDNGIKGTLLIADEGINGTVSGSREGIDGLMAWLKSDPRLIDIDHKESYCDEQPFYRTKVKLKKEIVTLGVEGVDPNKSVGTYVEPKDWNDLITDPEVLLIDTRNDYEVSIGTFEGAIDPKTTSFREFPEYIKAHFDPAVHKKVAMFCTGGIRCEKASSYMLGEGFEEVYHLKGGILKYLEEVPEQESQWRGECFVFDNRVTVRHDLTEGDYDQCHACRTPISAEDRASEHYAPGVSCPHCWDSLSEKTRRSAIDRQKQIELAKARNQPHPIGRNYRLPSEA</sequence>
<comment type="function">
    <text evidence="1">Catalyzes oxygen-dependent 5-hydroxyuridine (ho5U) modification at position 34 in tRNAs.</text>
</comment>
<comment type="catalytic activity">
    <reaction evidence="1">
        <text>uridine(34) in tRNA + AH2 + O2 = 5-hydroxyuridine(34) in tRNA + A + H2O</text>
        <dbReference type="Rhea" id="RHEA:64224"/>
        <dbReference type="Rhea" id="RHEA-COMP:11727"/>
        <dbReference type="Rhea" id="RHEA-COMP:13381"/>
        <dbReference type="ChEBI" id="CHEBI:13193"/>
        <dbReference type="ChEBI" id="CHEBI:15377"/>
        <dbReference type="ChEBI" id="CHEBI:15379"/>
        <dbReference type="ChEBI" id="CHEBI:17499"/>
        <dbReference type="ChEBI" id="CHEBI:65315"/>
        <dbReference type="ChEBI" id="CHEBI:136877"/>
    </reaction>
</comment>
<comment type="similarity">
    <text evidence="1">Belongs to the TrhO family.</text>
</comment>
<name>TRHO_PSESM</name>
<organism>
    <name type="scientific">Pseudomonas syringae pv. tomato (strain ATCC BAA-871 / DC3000)</name>
    <dbReference type="NCBI Taxonomy" id="223283"/>
    <lineage>
        <taxon>Bacteria</taxon>
        <taxon>Pseudomonadati</taxon>
        <taxon>Pseudomonadota</taxon>
        <taxon>Gammaproteobacteria</taxon>
        <taxon>Pseudomonadales</taxon>
        <taxon>Pseudomonadaceae</taxon>
        <taxon>Pseudomonas</taxon>
    </lineage>
</organism>
<keyword id="KW-0560">Oxidoreductase</keyword>
<keyword id="KW-1185">Reference proteome</keyword>
<keyword id="KW-0819">tRNA processing</keyword>
<reference key="1">
    <citation type="journal article" date="2003" name="Proc. Natl. Acad. Sci. U.S.A.">
        <title>The complete genome sequence of the Arabidopsis and tomato pathogen Pseudomonas syringae pv. tomato DC3000.</title>
        <authorList>
            <person name="Buell C.R."/>
            <person name="Joardar V."/>
            <person name="Lindeberg M."/>
            <person name="Selengut J."/>
            <person name="Paulsen I.T."/>
            <person name="Gwinn M.L."/>
            <person name="Dodson R.J."/>
            <person name="DeBoy R.T."/>
            <person name="Durkin A.S."/>
            <person name="Kolonay J.F."/>
            <person name="Madupu R."/>
            <person name="Daugherty S.C."/>
            <person name="Brinkac L.M."/>
            <person name="Beanan M.J."/>
            <person name="Haft D.H."/>
            <person name="Nelson W.C."/>
            <person name="Davidsen T.M."/>
            <person name="Zafar N."/>
            <person name="Zhou L."/>
            <person name="Liu J."/>
            <person name="Yuan Q."/>
            <person name="Khouri H.M."/>
            <person name="Fedorova N.B."/>
            <person name="Tran B."/>
            <person name="Russell D."/>
            <person name="Berry K.J."/>
            <person name="Utterback T.R."/>
            <person name="Van Aken S.E."/>
            <person name="Feldblyum T.V."/>
            <person name="D'Ascenzo M."/>
            <person name="Deng W.-L."/>
            <person name="Ramos A.R."/>
            <person name="Alfano J.R."/>
            <person name="Cartinhour S."/>
            <person name="Chatterjee A.K."/>
            <person name="Delaney T.P."/>
            <person name="Lazarowitz S.G."/>
            <person name="Martin G.B."/>
            <person name="Schneider D.J."/>
            <person name="Tang X."/>
            <person name="Bender C.L."/>
            <person name="White O."/>
            <person name="Fraser C.M."/>
            <person name="Collmer A."/>
        </authorList>
    </citation>
    <scope>NUCLEOTIDE SEQUENCE [LARGE SCALE GENOMIC DNA]</scope>
    <source>
        <strain>ATCC BAA-871 / DC3000</strain>
    </source>
</reference>
<gene>
    <name evidence="1" type="primary">trhO</name>
    <name type="ordered locus">PSPTO_1734</name>
</gene>